<protein>
    <recommendedName>
        <fullName evidence="1">2,3-bisphosphoglycerate-independent phosphoglycerate mutase</fullName>
        <shortName evidence="1">BPG-independent PGAM</shortName>
        <shortName evidence="1">Phosphoglyceromutase</shortName>
        <shortName evidence="1">iPGM</shortName>
        <ecNumber evidence="1">5.4.2.12</ecNumber>
    </recommendedName>
</protein>
<organism>
    <name type="scientific">Natronomonas pharaonis (strain ATCC 35678 / DSM 2160 / CIP 103997 / JCM 8858 / NBRC 14720 / NCIMB 2260 / Gabara)</name>
    <name type="common">Halobacterium pharaonis</name>
    <dbReference type="NCBI Taxonomy" id="348780"/>
    <lineage>
        <taxon>Archaea</taxon>
        <taxon>Methanobacteriati</taxon>
        <taxon>Methanobacteriota</taxon>
        <taxon>Stenosarchaea group</taxon>
        <taxon>Halobacteria</taxon>
        <taxon>Halobacteriales</taxon>
        <taxon>Haloarculaceae</taxon>
        <taxon>Natronomonas</taxon>
    </lineage>
</organism>
<name>GPMI_NATPD</name>
<reference key="1">
    <citation type="journal article" date="2005" name="Genome Res.">
        <title>Living with two extremes: conclusions from the genome sequence of Natronomonas pharaonis.</title>
        <authorList>
            <person name="Falb M."/>
            <person name="Pfeiffer F."/>
            <person name="Palm P."/>
            <person name="Rodewald K."/>
            <person name="Hickmann V."/>
            <person name="Tittor J."/>
            <person name="Oesterhelt D."/>
        </authorList>
    </citation>
    <scope>NUCLEOTIDE SEQUENCE [LARGE SCALE GENOMIC DNA]</scope>
    <source>
        <strain>ATCC 35678 / DSM 2160 / CIP 103997 / JCM 8858 / NBRC 14720 / NCIMB 2260 / Gabara</strain>
    </source>
</reference>
<evidence type="ECO:0000255" key="1">
    <source>
        <dbReference type="HAMAP-Rule" id="MF_01038"/>
    </source>
</evidence>
<accession>Q3IS17</accession>
<proteinExistence type="inferred from homology"/>
<keyword id="KW-0324">Glycolysis</keyword>
<keyword id="KW-0413">Isomerase</keyword>
<keyword id="KW-0464">Manganese</keyword>
<keyword id="KW-0479">Metal-binding</keyword>
<keyword id="KW-1185">Reference proteome</keyword>
<dbReference type="EC" id="5.4.2.12" evidence="1"/>
<dbReference type="EMBL" id="CR936257">
    <property type="protein sequence ID" value="CAI49073.1"/>
    <property type="molecule type" value="Genomic_DNA"/>
</dbReference>
<dbReference type="RefSeq" id="WP_011322703.1">
    <property type="nucleotide sequence ID" value="NC_007426.1"/>
</dbReference>
<dbReference type="SMR" id="Q3IS17"/>
<dbReference type="STRING" id="348780.NP_1964A"/>
<dbReference type="EnsemblBacteria" id="CAI49073">
    <property type="protein sequence ID" value="CAI49073"/>
    <property type="gene ID" value="NP_1964A"/>
</dbReference>
<dbReference type="GeneID" id="3702768"/>
<dbReference type="KEGG" id="nph:NP_1964A"/>
<dbReference type="eggNOG" id="arCOG03068">
    <property type="taxonomic scope" value="Archaea"/>
</dbReference>
<dbReference type="HOGENOM" id="CLU_026099_2_0_2"/>
<dbReference type="OrthoDB" id="146005at2157"/>
<dbReference type="UniPathway" id="UPA00109">
    <property type="reaction ID" value="UER00186"/>
</dbReference>
<dbReference type="Proteomes" id="UP000002698">
    <property type="component" value="Chromosome"/>
</dbReference>
<dbReference type="GO" id="GO:0005737">
    <property type="term" value="C:cytoplasm"/>
    <property type="evidence" value="ECO:0007669"/>
    <property type="project" value="InterPro"/>
</dbReference>
<dbReference type="GO" id="GO:0030145">
    <property type="term" value="F:manganese ion binding"/>
    <property type="evidence" value="ECO:0007669"/>
    <property type="project" value="UniProtKB-UniRule"/>
</dbReference>
<dbReference type="GO" id="GO:0004619">
    <property type="term" value="F:phosphoglycerate mutase activity"/>
    <property type="evidence" value="ECO:0007669"/>
    <property type="project" value="UniProtKB-EC"/>
</dbReference>
<dbReference type="GO" id="GO:0006007">
    <property type="term" value="P:glucose catabolic process"/>
    <property type="evidence" value="ECO:0007669"/>
    <property type="project" value="InterPro"/>
</dbReference>
<dbReference type="GO" id="GO:0006096">
    <property type="term" value="P:glycolytic process"/>
    <property type="evidence" value="ECO:0007669"/>
    <property type="project" value="UniProtKB-UniRule"/>
</dbReference>
<dbReference type="CDD" id="cd16010">
    <property type="entry name" value="iPGM"/>
    <property type="match status" value="1"/>
</dbReference>
<dbReference type="FunFam" id="3.40.1450.10:FF:000002">
    <property type="entry name" value="2,3-bisphosphoglycerate-independent phosphoglycerate mutase"/>
    <property type="match status" value="1"/>
</dbReference>
<dbReference type="Gene3D" id="3.40.720.10">
    <property type="entry name" value="Alkaline Phosphatase, subunit A"/>
    <property type="match status" value="1"/>
</dbReference>
<dbReference type="Gene3D" id="3.40.1450.10">
    <property type="entry name" value="BPG-independent phosphoglycerate mutase, domain B"/>
    <property type="match status" value="1"/>
</dbReference>
<dbReference type="HAMAP" id="MF_01038">
    <property type="entry name" value="GpmI"/>
    <property type="match status" value="1"/>
</dbReference>
<dbReference type="InterPro" id="IPR017850">
    <property type="entry name" value="Alkaline_phosphatase_core_sf"/>
</dbReference>
<dbReference type="InterPro" id="IPR011258">
    <property type="entry name" value="BPG-indep_PGM_N"/>
</dbReference>
<dbReference type="InterPro" id="IPR006124">
    <property type="entry name" value="Metalloenzyme"/>
</dbReference>
<dbReference type="InterPro" id="IPR036646">
    <property type="entry name" value="PGAM_B_sf"/>
</dbReference>
<dbReference type="InterPro" id="IPR005995">
    <property type="entry name" value="Pgm_bpd_ind"/>
</dbReference>
<dbReference type="NCBIfam" id="TIGR01307">
    <property type="entry name" value="pgm_bpd_ind"/>
    <property type="match status" value="1"/>
</dbReference>
<dbReference type="PANTHER" id="PTHR31637">
    <property type="entry name" value="2,3-BISPHOSPHOGLYCERATE-INDEPENDENT PHOSPHOGLYCERATE MUTASE"/>
    <property type="match status" value="1"/>
</dbReference>
<dbReference type="PANTHER" id="PTHR31637:SF0">
    <property type="entry name" value="2,3-BISPHOSPHOGLYCERATE-INDEPENDENT PHOSPHOGLYCERATE MUTASE"/>
    <property type="match status" value="1"/>
</dbReference>
<dbReference type="Pfam" id="PF06415">
    <property type="entry name" value="iPGM_N"/>
    <property type="match status" value="1"/>
</dbReference>
<dbReference type="Pfam" id="PF01676">
    <property type="entry name" value="Metalloenzyme"/>
    <property type="match status" value="1"/>
</dbReference>
<dbReference type="PIRSF" id="PIRSF001492">
    <property type="entry name" value="IPGAM"/>
    <property type="match status" value="1"/>
</dbReference>
<dbReference type="SUPFAM" id="SSF64158">
    <property type="entry name" value="2,3-Bisphosphoglycerate-independent phosphoglycerate mutase, substrate-binding domain"/>
    <property type="match status" value="1"/>
</dbReference>
<dbReference type="SUPFAM" id="SSF53649">
    <property type="entry name" value="Alkaline phosphatase-like"/>
    <property type="match status" value="1"/>
</dbReference>
<comment type="function">
    <text evidence="1">Catalyzes the interconversion of 2-phosphoglycerate and 3-phosphoglycerate.</text>
</comment>
<comment type="catalytic activity">
    <reaction evidence="1">
        <text>(2R)-2-phosphoglycerate = (2R)-3-phosphoglycerate</text>
        <dbReference type="Rhea" id="RHEA:15901"/>
        <dbReference type="ChEBI" id="CHEBI:58272"/>
        <dbReference type="ChEBI" id="CHEBI:58289"/>
        <dbReference type="EC" id="5.4.2.12"/>
    </reaction>
</comment>
<comment type="cofactor">
    <cofactor evidence="1">
        <name>Mn(2+)</name>
        <dbReference type="ChEBI" id="CHEBI:29035"/>
    </cofactor>
    <text evidence="1">Binds 2 manganese ions per subunit.</text>
</comment>
<comment type="pathway">
    <text evidence="1">Carbohydrate degradation; glycolysis; pyruvate from D-glyceraldehyde 3-phosphate: step 3/5.</text>
</comment>
<comment type="similarity">
    <text evidence="1">Belongs to the BPG-independent phosphoglycerate mutase family.</text>
</comment>
<feature type="chain" id="PRO_0000212243" description="2,3-bisphosphoglycerate-independent phosphoglycerate mutase">
    <location>
        <begin position="1"/>
        <end position="506"/>
    </location>
</feature>
<feature type="active site" description="Phosphoserine intermediate" evidence="1">
    <location>
        <position position="59"/>
    </location>
</feature>
<feature type="binding site" evidence="1">
    <location>
        <position position="9"/>
    </location>
    <ligand>
        <name>Mn(2+)</name>
        <dbReference type="ChEBI" id="CHEBI:29035"/>
        <label>2</label>
    </ligand>
</feature>
<feature type="binding site" evidence="1">
    <location>
        <position position="59"/>
    </location>
    <ligand>
        <name>Mn(2+)</name>
        <dbReference type="ChEBI" id="CHEBI:29035"/>
        <label>2</label>
    </ligand>
</feature>
<feature type="binding site" evidence="1">
    <location>
        <position position="120"/>
    </location>
    <ligand>
        <name>substrate</name>
    </ligand>
</feature>
<feature type="binding site" evidence="1">
    <location>
        <begin position="149"/>
        <end position="150"/>
    </location>
    <ligand>
        <name>substrate</name>
    </ligand>
</feature>
<feature type="binding site" evidence="1">
    <location>
        <position position="181"/>
    </location>
    <ligand>
        <name>substrate</name>
    </ligand>
</feature>
<feature type="binding site" evidence="1">
    <location>
        <position position="187"/>
    </location>
    <ligand>
        <name>substrate</name>
    </ligand>
</feature>
<feature type="binding site" evidence="1">
    <location>
        <begin position="254"/>
        <end position="257"/>
    </location>
    <ligand>
        <name>substrate</name>
    </ligand>
</feature>
<feature type="binding site" evidence="1">
    <location>
        <position position="327"/>
    </location>
    <ligand>
        <name>substrate</name>
    </ligand>
</feature>
<feature type="binding site" evidence="1">
    <location>
        <position position="394"/>
    </location>
    <ligand>
        <name>Mn(2+)</name>
        <dbReference type="ChEBI" id="CHEBI:29035"/>
        <label>1</label>
    </ligand>
</feature>
<feature type="binding site" evidence="1">
    <location>
        <position position="398"/>
    </location>
    <ligand>
        <name>Mn(2+)</name>
        <dbReference type="ChEBI" id="CHEBI:29035"/>
        <label>1</label>
    </ligand>
</feature>
<feature type="binding site" evidence="1">
    <location>
        <position position="435"/>
    </location>
    <ligand>
        <name>Mn(2+)</name>
        <dbReference type="ChEBI" id="CHEBI:29035"/>
        <label>2</label>
    </ligand>
</feature>
<feature type="binding site" evidence="1">
    <location>
        <position position="436"/>
    </location>
    <ligand>
        <name>Mn(2+)</name>
        <dbReference type="ChEBI" id="CHEBI:29035"/>
        <label>2</label>
    </ligand>
</feature>
<feature type="binding site" evidence="1">
    <location>
        <position position="452"/>
    </location>
    <ligand>
        <name>Mn(2+)</name>
        <dbReference type="ChEBI" id="CHEBI:29035"/>
        <label>1</label>
    </ligand>
</feature>
<sequence>MEAALVILDGWGLGDGDETDAVAAADTPAFDALAERGATGQLETHGRSVGLPDGQMGNSEVGHLNIGAGRVVKQDSTRVTDDIDAGVFADNEALARAFDHADDHDGRVHFMGLVSDGGVHSYQSHLHALVDLAAERGVEAVTHAFTDGRDTAPKSGVGFIEDLAATVEEAGTGDVATVCGRYYAMDRDENWERTKRAYDAIVHREAPHEADSAVAAVAASYDRGDTDEYVEPTLVSGTDAPLSADDAVVFFNFRADRARQLVRMLADIDPDWAFETDPPAAALVTMTEYDETFDLPVAYPPLAPEQPLGAVLAESDRTQLRMAESEKYAHVTYFLNGGREVAFEGERRDIVDSPDVPTYDEQPAMSAPELTDAAIDHIGADAPDVLVLNYANPDMVGHTGDFEAAKAAIEAVDEQLGRLESAIREAGGHLFVTADHGNADDMGTPEAPHTAHTTNPVPFVYCTPDGTDGGYTVRDGGTLADIAPTLLSTIGVDIPETMTGESLLER</sequence>
<gene>
    <name evidence="1" type="primary">gpmI</name>
    <name type="synonym">gpmA</name>
    <name type="ordered locus">NP_1964A</name>
</gene>